<protein>
    <recommendedName>
        <fullName evidence="1">Cytidylate kinase</fullName>
        <shortName evidence="1">CK</shortName>
        <ecNumber evidence="1">2.7.4.25</ecNumber>
    </recommendedName>
    <alternativeName>
        <fullName evidence="1">Cytidine monophosphate kinase</fullName>
        <shortName evidence="1">CMP kinase</shortName>
    </alternativeName>
</protein>
<proteinExistence type="inferred from homology"/>
<evidence type="ECO:0000255" key="1">
    <source>
        <dbReference type="HAMAP-Rule" id="MF_00238"/>
    </source>
</evidence>
<keyword id="KW-0067">ATP-binding</keyword>
<keyword id="KW-0963">Cytoplasm</keyword>
<keyword id="KW-0418">Kinase</keyword>
<keyword id="KW-0547">Nucleotide-binding</keyword>
<keyword id="KW-1185">Reference proteome</keyword>
<keyword id="KW-0808">Transferase</keyword>
<reference key="1">
    <citation type="journal article" date="2006" name="Proc. Natl. Acad. Sci. U.S.A.">
        <title>Burkholderia xenovorans LB400 harbors a multi-replicon, 9.73-Mbp genome shaped for versatility.</title>
        <authorList>
            <person name="Chain P.S.G."/>
            <person name="Denef V.J."/>
            <person name="Konstantinidis K.T."/>
            <person name="Vergez L.M."/>
            <person name="Agullo L."/>
            <person name="Reyes V.L."/>
            <person name="Hauser L."/>
            <person name="Cordova M."/>
            <person name="Gomez L."/>
            <person name="Gonzalez M."/>
            <person name="Land M."/>
            <person name="Lao V."/>
            <person name="Larimer F."/>
            <person name="LiPuma J.J."/>
            <person name="Mahenthiralingam E."/>
            <person name="Malfatti S.A."/>
            <person name="Marx C.J."/>
            <person name="Parnell J.J."/>
            <person name="Ramette A."/>
            <person name="Richardson P."/>
            <person name="Seeger M."/>
            <person name="Smith D."/>
            <person name="Spilker T."/>
            <person name="Sul W.J."/>
            <person name="Tsoi T.V."/>
            <person name="Ulrich L.E."/>
            <person name="Zhulin I.B."/>
            <person name="Tiedje J.M."/>
        </authorList>
    </citation>
    <scope>NUCLEOTIDE SEQUENCE [LARGE SCALE GENOMIC DNA]</scope>
    <source>
        <strain>LB400</strain>
    </source>
</reference>
<accession>Q13VC3</accession>
<gene>
    <name evidence="1" type="primary">cmk</name>
    <name type="ordered locus">Bxeno_A3428</name>
    <name type="ORF">Bxe_A0981</name>
</gene>
<organism>
    <name type="scientific">Paraburkholderia xenovorans (strain LB400)</name>
    <dbReference type="NCBI Taxonomy" id="266265"/>
    <lineage>
        <taxon>Bacteria</taxon>
        <taxon>Pseudomonadati</taxon>
        <taxon>Pseudomonadota</taxon>
        <taxon>Betaproteobacteria</taxon>
        <taxon>Burkholderiales</taxon>
        <taxon>Burkholderiaceae</taxon>
        <taxon>Paraburkholderia</taxon>
    </lineage>
</organism>
<dbReference type="EC" id="2.7.4.25" evidence="1"/>
<dbReference type="EMBL" id="CP000270">
    <property type="protein sequence ID" value="ABE31966.1"/>
    <property type="molecule type" value="Genomic_DNA"/>
</dbReference>
<dbReference type="RefSeq" id="WP_011489480.1">
    <property type="nucleotide sequence ID" value="NC_007951.1"/>
</dbReference>
<dbReference type="SMR" id="Q13VC3"/>
<dbReference type="STRING" id="266265.Bxe_A0981"/>
<dbReference type="KEGG" id="bxb:DR64_3142"/>
<dbReference type="KEGG" id="bxe:Bxe_A0981"/>
<dbReference type="PATRIC" id="fig|266265.5.peg.3600"/>
<dbReference type="eggNOG" id="COG0283">
    <property type="taxonomic scope" value="Bacteria"/>
</dbReference>
<dbReference type="OrthoDB" id="9807434at2"/>
<dbReference type="Proteomes" id="UP000001817">
    <property type="component" value="Chromosome 1"/>
</dbReference>
<dbReference type="GO" id="GO:0005737">
    <property type="term" value="C:cytoplasm"/>
    <property type="evidence" value="ECO:0007669"/>
    <property type="project" value="UniProtKB-SubCell"/>
</dbReference>
<dbReference type="GO" id="GO:0005524">
    <property type="term" value="F:ATP binding"/>
    <property type="evidence" value="ECO:0007669"/>
    <property type="project" value="UniProtKB-UniRule"/>
</dbReference>
<dbReference type="GO" id="GO:0036430">
    <property type="term" value="F:CMP kinase activity"/>
    <property type="evidence" value="ECO:0007669"/>
    <property type="project" value="RHEA"/>
</dbReference>
<dbReference type="GO" id="GO:0036431">
    <property type="term" value="F:dCMP kinase activity"/>
    <property type="evidence" value="ECO:0007669"/>
    <property type="project" value="RHEA"/>
</dbReference>
<dbReference type="GO" id="GO:0006220">
    <property type="term" value="P:pyrimidine nucleotide metabolic process"/>
    <property type="evidence" value="ECO:0007669"/>
    <property type="project" value="UniProtKB-UniRule"/>
</dbReference>
<dbReference type="CDD" id="cd02020">
    <property type="entry name" value="CMPK"/>
    <property type="match status" value="1"/>
</dbReference>
<dbReference type="Gene3D" id="3.40.50.300">
    <property type="entry name" value="P-loop containing nucleotide triphosphate hydrolases"/>
    <property type="match status" value="1"/>
</dbReference>
<dbReference type="HAMAP" id="MF_00238">
    <property type="entry name" value="Cytidyl_kinase_type1"/>
    <property type="match status" value="1"/>
</dbReference>
<dbReference type="InterPro" id="IPR003136">
    <property type="entry name" value="Cytidylate_kin"/>
</dbReference>
<dbReference type="InterPro" id="IPR011994">
    <property type="entry name" value="Cytidylate_kinase_dom"/>
</dbReference>
<dbReference type="InterPro" id="IPR027417">
    <property type="entry name" value="P-loop_NTPase"/>
</dbReference>
<dbReference type="NCBIfam" id="TIGR00017">
    <property type="entry name" value="cmk"/>
    <property type="match status" value="1"/>
</dbReference>
<dbReference type="Pfam" id="PF02224">
    <property type="entry name" value="Cytidylate_kin"/>
    <property type="match status" value="1"/>
</dbReference>
<dbReference type="SUPFAM" id="SSF52540">
    <property type="entry name" value="P-loop containing nucleoside triphosphate hydrolases"/>
    <property type="match status" value="1"/>
</dbReference>
<feature type="chain" id="PRO_1000048204" description="Cytidylate kinase">
    <location>
        <begin position="1"/>
        <end position="228"/>
    </location>
</feature>
<feature type="binding site" evidence="1">
    <location>
        <begin position="17"/>
        <end position="25"/>
    </location>
    <ligand>
        <name>ATP</name>
        <dbReference type="ChEBI" id="CHEBI:30616"/>
    </ligand>
</feature>
<sequence length="228" mass="24644">MKPTRPFHQTPVITIDGPSASGKGTVAALVAASLGFHLLDSGALYRLAALASLRYTIEAHDVDALVKLIDDLHITFREGLAQLDGVDVSAEIRAEEVGSRASAIAVHAPVRAALVARQRAFRKEPGLVADGRDMGTVIFQDAVLKVFMTASVEARAARRHKQLIQKGFSANIDDLLRDLRERDERDSQRVAAPLKPAADAKLLDTSALSVDQAVEQVVQWYEALVPHA</sequence>
<name>KCY_PARXL</name>
<comment type="catalytic activity">
    <reaction evidence="1">
        <text>CMP + ATP = CDP + ADP</text>
        <dbReference type="Rhea" id="RHEA:11600"/>
        <dbReference type="ChEBI" id="CHEBI:30616"/>
        <dbReference type="ChEBI" id="CHEBI:58069"/>
        <dbReference type="ChEBI" id="CHEBI:60377"/>
        <dbReference type="ChEBI" id="CHEBI:456216"/>
        <dbReference type="EC" id="2.7.4.25"/>
    </reaction>
</comment>
<comment type="catalytic activity">
    <reaction evidence="1">
        <text>dCMP + ATP = dCDP + ADP</text>
        <dbReference type="Rhea" id="RHEA:25094"/>
        <dbReference type="ChEBI" id="CHEBI:30616"/>
        <dbReference type="ChEBI" id="CHEBI:57566"/>
        <dbReference type="ChEBI" id="CHEBI:58593"/>
        <dbReference type="ChEBI" id="CHEBI:456216"/>
        <dbReference type="EC" id="2.7.4.25"/>
    </reaction>
</comment>
<comment type="subcellular location">
    <subcellularLocation>
        <location evidence="1">Cytoplasm</location>
    </subcellularLocation>
</comment>
<comment type="similarity">
    <text evidence="1">Belongs to the cytidylate kinase family. Type 1 subfamily.</text>
</comment>